<comment type="function">
    <text evidence="1">Required both for centrosome duplication and maturation. Required for pericentriolar material (PCM) recruitment.</text>
</comment>
<comment type="subcellular location">
    <subcellularLocation>
        <location evidence="1">Cytoplasm</location>
        <location evidence="1">Cytoskeleton</location>
        <location evidence="1">Microtubule organizing center</location>
        <location evidence="1">Centrosome</location>
        <location evidence="1">Centriole</location>
    </subcellularLocation>
    <text evidence="1">Component of the centrosome. Localizes to the centriole throughout the cell cycle and accumulates on the PCM during mitosis (By similarity). Recruitment to the centrosome during prophase of the 1-cell embryo is regulated by the cye-1/cdk-2 complex.</text>
</comment>
<organism>
    <name type="scientific">Caenorhabditis briggsae</name>
    <dbReference type="NCBI Taxonomy" id="6238"/>
    <lineage>
        <taxon>Eukaryota</taxon>
        <taxon>Metazoa</taxon>
        <taxon>Ecdysozoa</taxon>
        <taxon>Nematoda</taxon>
        <taxon>Chromadorea</taxon>
        <taxon>Rhabditida</taxon>
        <taxon>Rhabditina</taxon>
        <taxon>Rhabditomorpha</taxon>
        <taxon>Rhabditoidea</taxon>
        <taxon>Rhabditidae</taxon>
        <taxon>Peloderinae</taxon>
        <taxon>Caenorhabditis</taxon>
    </lineage>
</organism>
<dbReference type="EMBL" id="HE600913">
    <property type="protein sequence ID" value="CAP31389.1"/>
    <property type="molecule type" value="Genomic_DNA"/>
</dbReference>
<dbReference type="SMR" id="Q61DP2"/>
<dbReference type="FunCoup" id="Q61DP2">
    <property type="interactions" value="395"/>
</dbReference>
<dbReference type="STRING" id="6238.Q61DP2"/>
<dbReference type="EnsemblMetazoa" id="CBG12404.1">
    <property type="protein sequence ID" value="CBG12404.1"/>
    <property type="gene ID" value="WBGene00033359"/>
</dbReference>
<dbReference type="KEGG" id="cbr:CBG_12404"/>
<dbReference type="CTD" id="8581678"/>
<dbReference type="WormBase" id="CBG12404">
    <property type="protein sequence ID" value="CBP17508"/>
    <property type="gene ID" value="WBGene00033359"/>
    <property type="gene designation" value="Cbr-spd-2"/>
</dbReference>
<dbReference type="eggNOG" id="ENOG502RT76">
    <property type="taxonomic scope" value="Eukaryota"/>
</dbReference>
<dbReference type="HOGENOM" id="CLU_341384_0_0_1"/>
<dbReference type="InParanoid" id="Q61DP2"/>
<dbReference type="OMA" id="FTKCKFI"/>
<dbReference type="Proteomes" id="UP000008549">
    <property type="component" value="Unassembled WGS sequence"/>
</dbReference>
<dbReference type="GO" id="GO:0005814">
    <property type="term" value="C:centriole"/>
    <property type="evidence" value="ECO:0007669"/>
    <property type="project" value="UniProtKB-SubCell"/>
</dbReference>
<dbReference type="GO" id="GO:0005737">
    <property type="term" value="C:cytoplasm"/>
    <property type="evidence" value="ECO:0007669"/>
    <property type="project" value="UniProtKB-KW"/>
</dbReference>
<dbReference type="GO" id="GO:0000242">
    <property type="term" value="C:pericentriolar material"/>
    <property type="evidence" value="ECO:0007669"/>
    <property type="project" value="EnsemblMetazoa"/>
</dbReference>
<dbReference type="GO" id="GO:0060090">
    <property type="term" value="F:molecular adaptor activity"/>
    <property type="evidence" value="ECO:0007669"/>
    <property type="project" value="EnsemblMetazoa"/>
</dbReference>
<dbReference type="GO" id="GO:0019901">
    <property type="term" value="F:protein kinase binding"/>
    <property type="evidence" value="ECO:0007669"/>
    <property type="project" value="EnsemblMetazoa"/>
</dbReference>
<dbReference type="GO" id="GO:0007099">
    <property type="term" value="P:centriole replication"/>
    <property type="evidence" value="ECO:0007669"/>
    <property type="project" value="EnsemblMetazoa"/>
</dbReference>
<dbReference type="GO" id="GO:0090222">
    <property type="term" value="P:centrosome-templated microtubule nucleation"/>
    <property type="evidence" value="ECO:0007669"/>
    <property type="project" value="InterPro"/>
</dbReference>
<dbReference type="GO" id="GO:0009792">
    <property type="term" value="P:embryo development ending in birth or egg hatching"/>
    <property type="evidence" value="ECO:0007669"/>
    <property type="project" value="EnsemblMetazoa"/>
</dbReference>
<dbReference type="GO" id="GO:0071539">
    <property type="term" value="P:protein localization to centrosome"/>
    <property type="evidence" value="ECO:0007669"/>
    <property type="project" value="InterPro"/>
</dbReference>
<dbReference type="GO" id="GO:0040025">
    <property type="term" value="P:vulval development"/>
    <property type="evidence" value="ECO:0007669"/>
    <property type="project" value="EnsemblMetazoa"/>
</dbReference>
<dbReference type="Gene3D" id="2.60.40.10">
    <property type="entry name" value="Immunoglobulins"/>
    <property type="match status" value="1"/>
</dbReference>
<dbReference type="InterPro" id="IPR054090">
    <property type="entry name" value="Cep192_Spd-2-like_dom"/>
</dbReference>
<dbReference type="InterPro" id="IPR013783">
    <property type="entry name" value="Ig-like_fold"/>
</dbReference>
<dbReference type="InterPro" id="IPR039103">
    <property type="entry name" value="Spd-2/CEP192"/>
</dbReference>
<dbReference type="PANTHER" id="PTHR16029">
    <property type="entry name" value="CENTROSOMAL PROTEIN OF 192 KDA"/>
    <property type="match status" value="1"/>
</dbReference>
<dbReference type="PANTHER" id="PTHR16029:SF11">
    <property type="entry name" value="CENTROSOMAL PROTEIN OF 192 KDA"/>
    <property type="match status" value="1"/>
</dbReference>
<dbReference type="Pfam" id="PF22073">
    <property type="entry name" value="Cep192_D4"/>
    <property type="match status" value="1"/>
</dbReference>
<sequence length="829" mass="92996">MNEDAPMDLVDDRFADQSIQDEPVDDGESFYNEDVYVDCEEDEDDDVVPTSENFRLENRYKPSLHTPRELPTIREENREDVRSNTSSRVNTRPPSVLSDKSNDISNMFGFQDGGRAIDQYTDQFYSEGNRAERLFPEAGFLQNSPVRDKQNSWEPSVCHYEKQPTPEVKNNSPGLVFANMSSKKDVTRKQENVRPGKMMPEKVNDENEPKSRRFSPERNTFTTSPMNSTKYLEEKTSTPKRPGGTNRLGTRGLPSFECSTIYDISPQRTSGTPKTYESRHPTNAYTPNSATTSDTVLSNRTIGDNTVQNVLKGVDINLLTALENARKKRDRPQVKPDFRLNSLPRGKLSSTQRPKSDDHSSMTSIVSSSTQNNTGYRKIQEQRNSATSTDLTNSNTSNFTNNTSRVSTAKNDFSRSSRQRNGFSDSSVSTIIPNMNSMTTRDRDGRDSVSSVRTISRASSTMTVGGGNGHMTSGAPKPLRFHVSRLGFGYVPIGETLTMQLEVENTTDRPCKVNARLDSKITCFKVLDNATTMIDPKKAIKVRVAFTPTSLGRYSLYLKAEVAEQNFTQKIPVWGWGGVSKIAPISARNLQPTSNSSEFAMFVSDMKRIAFKLGNSGDRSGFALLTVYDSAMRQVPNSYVRFNPSNGIVIGKNYEKLIEIRIDPSYHDHYGELTNNRTSSAMSTVSTASSMASLRRRVIAGSDFFVQVAWGVEGIRERLRMLEMKHKRRQMIDGLDFTSHPFTDEKCVVYPPPDAYPTISDEDHDLFAASYSNFYINIFSSPDGLNAFRAATVSADKFDNDATVLETSAFRHQTFVNDVTMVPRHTKLM</sequence>
<keyword id="KW-0131">Cell cycle</keyword>
<keyword id="KW-0175">Coiled coil</keyword>
<keyword id="KW-0963">Cytoplasm</keyword>
<keyword id="KW-0206">Cytoskeleton</keyword>
<keyword id="KW-0217">Developmental protein</keyword>
<keyword id="KW-1185">Reference proteome</keyword>
<reference key="1">
    <citation type="journal article" date="2003" name="PLoS Biol.">
        <title>The genome sequence of Caenorhabditis briggsae: a platform for comparative genomics.</title>
        <authorList>
            <person name="Stein L.D."/>
            <person name="Bao Z."/>
            <person name="Blasiar D."/>
            <person name="Blumenthal T."/>
            <person name="Brent M.R."/>
            <person name="Chen N."/>
            <person name="Chinwalla A."/>
            <person name="Clarke L."/>
            <person name="Clee C."/>
            <person name="Coghlan A."/>
            <person name="Coulson A."/>
            <person name="D'Eustachio P."/>
            <person name="Fitch D.H.A."/>
            <person name="Fulton L.A."/>
            <person name="Fulton R.E."/>
            <person name="Griffiths-Jones S."/>
            <person name="Harris T.W."/>
            <person name="Hillier L.W."/>
            <person name="Kamath R."/>
            <person name="Kuwabara P.E."/>
            <person name="Mardis E.R."/>
            <person name="Marra M.A."/>
            <person name="Miner T.L."/>
            <person name="Minx P."/>
            <person name="Mullikin J.C."/>
            <person name="Plumb R.W."/>
            <person name="Rogers J."/>
            <person name="Schein J.E."/>
            <person name="Sohrmann M."/>
            <person name="Spieth J."/>
            <person name="Stajich J.E."/>
            <person name="Wei C."/>
            <person name="Willey D."/>
            <person name="Wilson R.K."/>
            <person name="Durbin R.M."/>
            <person name="Waterston R.H."/>
        </authorList>
    </citation>
    <scope>NUCLEOTIDE SEQUENCE [LARGE SCALE GENOMIC DNA]</scope>
    <source>
        <strain>AF16</strain>
    </source>
</reference>
<accession>Q61DP2</accession>
<accession>A8XFC8</accession>
<protein>
    <recommendedName>
        <fullName>Spindle-defective protein 2</fullName>
    </recommendedName>
</protein>
<feature type="chain" id="PRO_0000072111" description="Spindle-defective protein 2">
    <location>
        <begin position="1"/>
        <end position="829"/>
    </location>
</feature>
<feature type="region of interest" description="Disordered" evidence="3">
    <location>
        <begin position="1"/>
        <end position="29"/>
    </location>
</feature>
<feature type="region of interest" description="Disordered" evidence="3">
    <location>
        <begin position="41"/>
        <end position="104"/>
    </location>
</feature>
<feature type="region of interest" description="Disordered" evidence="3">
    <location>
        <begin position="183"/>
        <end position="294"/>
    </location>
</feature>
<feature type="region of interest" description="Disordered" evidence="3">
    <location>
        <begin position="326"/>
        <end position="471"/>
    </location>
</feature>
<feature type="coiled-coil region" evidence="2">
    <location>
        <begin position="314"/>
        <end position="332"/>
    </location>
</feature>
<feature type="compositionally biased region" description="Basic and acidic residues" evidence="3">
    <location>
        <begin position="54"/>
        <end position="82"/>
    </location>
</feature>
<feature type="compositionally biased region" description="Polar residues" evidence="3">
    <location>
        <begin position="83"/>
        <end position="93"/>
    </location>
</feature>
<feature type="compositionally biased region" description="Basic and acidic residues" evidence="3">
    <location>
        <begin position="183"/>
        <end position="216"/>
    </location>
</feature>
<feature type="compositionally biased region" description="Polar residues" evidence="3">
    <location>
        <begin position="217"/>
        <end position="230"/>
    </location>
</feature>
<feature type="compositionally biased region" description="Polar residues" evidence="3">
    <location>
        <begin position="266"/>
        <end position="294"/>
    </location>
</feature>
<feature type="compositionally biased region" description="Low complexity" evidence="3">
    <location>
        <begin position="361"/>
        <end position="370"/>
    </location>
</feature>
<feature type="compositionally biased region" description="Low complexity" evidence="3">
    <location>
        <begin position="384"/>
        <end position="408"/>
    </location>
</feature>
<feature type="compositionally biased region" description="Polar residues" evidence="3">
    <location>
        <begin position="409"/>
        <end position="439"/>
    </location>
</feature>
<feature type="compositionally biased region" description="Polar residues" evidence="3">
    <location>
        <begin position="448"/>
        <end position="463"/>
    </location>
</feature>
<evidence type="ECO:0000250" key="1">
    <source>
        <dbReference type="UniProtKB" id="P91870"/>
    </source>
</evidence>
<evidence type="ECO:0000255" key="2"/>
<evidence type="ECO:0000256" key="3">
    <source>
        <dbReference type="SAM" id="MobiDB-lite"/>
    </source>
</evidence>
<evidence type="ECO:0000312" key="4">
    <source>
        <dbReference type="WormBase" id="CBG12404"/>
    </source>
</evidence>
<gene>
    <name evidence="4" type="primary">spd-2</name>
    <name evidence="4" type="ORF">CBG12404</name>
</gene>
<proteinExistence type="inferred from homology"/>
<name>SPD2_CAEBR</name>